<organism>
    <name type="scientific">Shigella flexneri</name>
    <dbReference type="NCBI Taxonomy" id="623"/>
    <lineage>
        <taxon>Bacteria</taxon>
        <taxon>Pseudomonadati</taxon>
        <taxon>Pseudomonadota</taxon>
        <taxon>Gammaproteobacteria</taxon>
        <taxon>Enterobacterales</taxon>
        <taxon>Enterobacteriaceae</taxon>
        <taxon>Shigella</taxon>
    </lineage>
</organism>
<name>YECF_SHIFL</name>
<sequence length="74" mass="8239">MSTPDFSTAENNQELANEVSCLKAMLTLMLQAMGQADAGRVMLKMEKQLALIEDETQAAVFSKTVKQIKQAYRQ</sequence>
<protein>
    <recommendedName>
        <fullName>Uncharacterized protein YecF</fullName>
    </recommendedName>
</protein>
<reference key="1">
    <citation type="journal article" date="2002" name="Nucleic Acids Res.">
        <title>Genome sequence of Shigella flexneri 2a: insights into pathogenicity through comparison with genomes of Escherichia coli K12 and O157.</title>
        <authorList>
            <person name="Jin Q."/>
            <person name="Yuan Z."/>
            <person name="Xu J."/>
            <person name="Wang Y."/>
            <person name="Shen Y."/>
            <person name="Lu W."/>
            <person name="Wang J."/>
            <person name="Liu H."/>
            <person name="Yang J."/>
            <person name="Yang F."/>
            <person name="Zhang X."/>
            <person name="Zhang J."/>
            <person name="Yang G."/>
            <person name="Wu H."/>
            <person name="Qu D."/>
            <person name="Dong J."/>
            <person name="Sun L."/>
            <person name="Xue Y."/>
            <person name="Zhao A."/>
            <person name="Gao Y."/>
            <person name="Zhu J."/>
            <person name="Kan B."/>
            <person name="Ding K."/>
            <person name="Chen S."/>
            <person name="Cheng H."/>
            <person name="Yao Z."/>
            <person name="He B."/>
            <person name="Chen R."/>
            <person name="Ma D."/>
            <person name="Qiang B."/>
            <person name="Wen Y."/>
            <person name="Hou Y."/>
            <person name="Yu J."/>
        </authorList>
    </citation>
    <scope>NUCLEOTIDE SEQUENCE [LARGE SCALE GENOMIC DNA]</scope>
    <source>
        <strain>301 / Serotype 2a</strain>
    </source>
</reference>
<reference key="2">
    <citation type="journal article" date="2003" name="Infect. Immun.">
        <title>Complete genome sequence and comparative genomics of Shigella flexneri serotype 2a strain 2457T.</title>
        <authorList>
            <person name="Wei J."/>
            <person name="Goldberg M.B."/>
            <person name="Burland V."/>
            <person name="Venkatesan M.M."/>
            <person name="Deng W."/>
            <person name="Fournier G."/>
            <person name="Mayhew G.F."/>
            <person name="Plunkett G. III"/>
            <person name="Rose D.J."/>
            <person name="Darling A."/>
            <person name="Mau B."/>
            <person name="Perna N.T."/>
            <person name="Payne S.M."/>
            <person name="Runyen-Janecky L.J."/>
            <person name="Zhou S."/>
            <person name="Schwartz D.C."/>
            <person name="Blattner F.R."/>
        </authorList>
    </citation>
    <scope>NUCLEOTIDE SEQUENCE [LARGE SCALE GENOMIC DNA]</scope>
    <source>
        <strain>ATCC 700930 / 2457T / Serotype 2a</strain>
    </source>
</reference>
<feature type="chain" id="PRO_0000169075" description="Uncharacterized protein YecF">
    <location>
        <begin position="1"/>
        <end position="74"/>
    </location>
</feature>
<proteinExistence type="predicted"/>
<accession>P0AD09</accession>
<accession>O07984</accession>
<accession>P46120</accession>
<accession>P76312</accession>
<keyword id="KW-1185">Reference proteome</keyword>
<gene>
    <name type="primary">yecF</name>
    <name type="ordered locus">SF1958</name>
    <name type="ordered locus">S2054</name>
</gene>
<dbReference type="EMBL" id="AE005674">
    <property type="protein sequence ID" value="AAN43509.1"/>
    <property type="molecule type" value="Genomic_DNA"/>
</dbReference>
<dbReference type="EMBL" id="AE014073">
    <property type="protein sequence ID" value="AAP17339.1"/>
    <property type="molecule type" value="Genomic_DNA"/>
</dbReference>
<dbReference type="RefSeq" id="NP_707802.1">
    <property type="nucleotide sequence ID" value="NC_004337.2"/>
</dbReference>
<dbReference type="RefSeq" id="WP_000106474.1">
    <property type="nucleotide sequence ID" value="NZ_WPGW01000033.1"/>
</dbReference>
<dbReference type="SMR" id="P0AD09"/>
<dbReference type="STRING" id="198214.SF1958"/>
<dbReference type="PaxDb" id="198214-SF1958"/>
<dbReference type="GeneID" id="1025152"/>
<dbReference type="GeneID" id="93776221"/>
<dbReference type="KEGG" id="sfl:SF1958"/>
<dbReference type="KEGG" id="sfx:S2054"/>
<dbReference type="PATRIC" id="fig|198214.7.peg.2338"/>
<dbReference type="HOGENOM" id="CLU_200496_0_0_6"/>
<dbReference type="Proteomes" id="UP000001006">
    <property type="component" value="Chromosome"/>
</dbReference>
<dbReference type="Proteomes" id="UP000002673">
    <property type="component" value="Chromosome"/>
</dbReference>
<dbReference type="InterPro" id="IPR019705">
    <property type="entry name" value="DUF2594"/>
</dbReference>
<dbReference type="NCBIfam" id="NF007904">
    <property type="entry name" value="PRK10613.1"/>
    <property type="match status" value="1"/>
</dbReference>
<dbReference type="Pfam" id="PF10769">
    <property type="entry name" value="DUF2594"/>
    <property type="match status" value="1"/>
</dbReference>